<comment type="similarity">
    <text evidence="1">Belongs to the PDCD5 family.</text>
</comment>
<evidence type="ECO:0000255" key="1">
    <source>
        <dbReference type="HAMAP-Rule" id="MF_00026"/>
    </source>
</evidence>
<evidence type="ECO:0000256" key="2">
    <source>
        <dbReference type="SAM" id="MobiDB-lite"/>
    </source>
</evidence>
<accession>Q6M0W1</accession>
<feature type="chain" id="PRO_0000121558" description="DNA-binding protein MMP0157">
    <location>
        <begin position="1"/>
        <end position="119"/>
    </location>
</feature>
<feature type="region of interest" description="Disordered" evidence="2">
    <location>
        <begin position="1"/>
        <end position="35"/>
    </location>
</feature>
<feature type="compositionally biased region" description="Basic and acidic residues" evidence="2">
    <location>
        <begin position="1"/>
        <end position="12"/>
    </location>
</feature>
<organism>
    <name type="scientific">Methanococcus maripaludis (strain DSM 14266 / JCM 13030 / NBRC 101832 / S2 / LL)</name>
    <dbReference type="NCBI Taxonomy" id="267377"/>
    <lineage>
        <taxon>Archaea</taxon>
        <taxon>Methanobacteriati</taxon>
        <taxon>Methanobacteriota</taxon>
        <taxon>Methanomada group</taxon>
        <taxon>Methanococci</taxon>
        <taxon>Methanococcales</taxon>
        <taxon>Methanococcaceae</taxon>
        <taxon>Methanococcus</taxon>
    </lineage>
</organism>
<dbReference type="EMBL" id="BX950229">
    <property type="protein sequence ID" value="CAF29713.1"/>
    <property type="molecule type" value="Genomic_DNA"/>
</dbReference>
<dbReference type="RefSeq" id="WP_011170101.1">
    <property type="nucleotide sequence ID" value="NC_005791.1"/>
</dbReference>
<dbReference type="SMR" id="Q6M0W1"/>
<dbReference type="STRING" id="267377.MMP0157"/>
<dbReference type="EnsemblBacteria" id="CAF29713">
    <property type="protein sequence ID" value="CAF29713"/>
    <property type="gene ID" value="MMP0157"/>
</dbReference>
<dbReference type="KEGG" id="mmp:MMP0157"/>
<dbReference type="PATRIC" id="fig|267377.15.peg.161"/>
<dbReference type="eggNOG" id="arCOG04179">
    <property type="taxonomic scope" value="Archaea"/>
</dbReference>
<dbReference type="HOGENOM" id="CLU_122978_3_0_2"/>
<dbReference type="OrthoDB" id="7912at2157"/>
<dbReference type="Proteomes" id="UP000000590">
    <property type="component" value="Chromosome"/>
</dbReference>
<dbReference type="GO" id="GO:0005829">
    <property type="term" value="C:cytosol"/>
    <property type="evidence" value="ECO:0007669"/>
    <property type="project" value="TreeGrafter"/>
</dbReference>
<dbReference type="GO" id="GO:0003677">
    <property type="term" value="F:DNA binding"/>
    <property type="evidence" value="ECO:0007669"/>
    <property type="project" value="UniProtKB-UniRule"/>
</dbReference>
<dbReference type="Gene3D" id="1.10.8.140">
    <property type="entry name" value="PDCD5-like"/>
    <property type="match status" value="1"/>
</dbReference>
<dbReference type="HAMAP" id="MF_00026">
    <property type="entry name" value="dsDNA_bind"/>
    <property type="match status" value="1"/>
</dbReference>
<dbReference type="InterPro" id="IPR022889">
    <property type="entry name" value="DNA_bind_arc"/>
</dbReference>
<dbReference type="InterPro" id="IPR002836">
    <property type="entry name" value="PDCD5-like"/>
</dbReference>
<dbReference type="InterPro" id="IPR036883">
    <property type="entry name" value="PDCD5-like_sf"/>
</dbReference>
<dbReference type="NCBIfam" id="NF003268">
    <property type="entry name" value="PRK04239.1"/>
    <property type="match status" value="1"/>
</dbReference>
<dbReference type="PANTHER" id="PTHR10840">
    <property type="entry name" value="PROGRAMMED CELL DEATH PROTEIN 5"/>
    <property type="match status" value="1"/>
</dbReference>
<dbReference type="PANTHER" id="PTHR10840:SF0">
    <property type="entry name" value="PROGRAMMED CELL DEATH PROTEIN 5"/>
    <property type="match status" value="1"/>
</dbReference>
<dbReference type="Pfam" id="PF01984">
    <property type="entry name" value="dsDNA_bind"/>
    <property type="match status" value="1"/>
</dbReference>
<dbReference type="PIRSF" id="PIRSF015730">
    <property type="entry name" value="TFAR19"/>
    <property type="match status" value="1"/>
</dbReference>
<dbReference type="SUPFAM" id="SSF46950">
    <property type="entry name" value="Double-stranded DNA-binding domain"/>
    <property type="match status" value="1"/>
</dbReference>
<name>Y157_METMP</name>
<reference key="1">
    <citation type="journal article" date="2004" name="J. Bacteriol.">
        <title>Complete genome sequence of the genetically tractable hydrogenotrophic methanogen Methanococcus maripaludis.</title>
        <authorList>
            <person name="Hendrickson E.L."/>
            <person name="Kaul R."/>
            <person name="Zhou Y."/>
            <person name="Bovee D."/>
            <person name="Chapman P."/>
            <person name="Chung J."/>
            <person name="Conway de Macario E."/>
            <person name="Dodsworth J.A."/>
            <person name="Gillett W."/>
            <person name="Graham D.E."/>
            <person name="Hackett M."/>
            <person name="Haydock A.K."/>
            <person name="Kang A."/>
            <person name="Land M.L."/>
            <person name="Levy R."/>
            <person name="Lie T.J."/>
            <person name="Major T.A."/>
            <person name="Moore B.C."/>
            <person name="Porat I."/>
            <person name="Palmeiri A."/>
            <person name="Rouse G."/>
            <person name="Saenphimmachak C."/>
            <person name="Soell D."/>
            <person name="Van Dien S."/>
            <person name="Wang T."/>
            <person name="Whitman W.B."/>
            <person name="Xia Q."/>
            <person name="Zhang Y."/>
            <person name="Larimer F.W."/>
            <person name="Olson M.V."/>
            <person name="Leigh J.A."/>
        </authorList>
    </citation>
    <scope>NUCLEOTIDE SEQUENCE [LARGE SCALE GENOMIC DNA]</scope>
    <source>
        <strain>DSM 14266 / JCM 13030 / NBRC 101832 / S2 / LL</strain>
    </source>
</reference>
<protein>
    <recommendedName>
        <fullName evidence="1">DNA-binding protein MMP0157</fullName>
    </recommendedName>
</protein>
<keyword id="KW-0238">DNA-binding</keyword>
<keyword id="KW-1185">Reference proteome</keyword>
<sequence>MNPEEIRQRRLQEMQAKAQAQGAANDPEAQRQMQEQQMQYEMQKQKILRQILSEEARSRLARIKLAKPQFAEQVEMQLIQLAQAGKLPVPLTDEYFKGLLDKIYEMNRPAKKEITIMRK</sequence>
<proteinExistence type="inferred from homology"/>
<gene>
    <name type="ordered locus">MMP0157</name>
</gene>